<comment type="function">
    <text evidence="5">Glycoside hydrolase probably involved in ulvan degradation (Probable). Ulvan is the main polysaccharide component of the Ulvales (green seaweed) cell wall. It is composed of disaccharide building blocks comprising 3-sulfated rhamnose (Rha3S) linked to D-glucuronic acid (GlcA), L-iduronic acid (IduA), or D-xylose (Xyl) (Probable).</text>
</comment>
<comment type="subcellular location">
    <subcellularLocation>
        <location evidence="2">Cell outer membrane</location>
        <topology evidence="1">Lipid-anchor</topology>
        <orientation evidence="5">Periplasmic side</orientation>
    </subcellularLocation>
</comment>
<comment type="induction">
    <text evidence="2">By ulvan and rhamnose.</text>
</comment>
<comment type="similarity">
    <text evidence="4">Belongs to the glycosyl hydrolase 3 family.</text>
</comment>
<evidence type="ECO:0000255" key="1">
    <source>
        <dbReference type="PROSITE-ProRule" id="PRU00303"/>
    </source>
</evidence>
<evidence type="ECO:0000269" key="2">
    <source>
    </source>
</evidence>
<evidence type="ECO:0000303" key="3">
    <source>
    </source>
</evidence>
<evidence type="ECO:0000305" key="4"/>
<evidence type="ECO:0000305" key="5">
    <source>
    </source>
</evidence>
<sequence length="756" mass="83797">MKKLLFTFLVSTGTIFFSCQRTYTQSKDYKNASLTIEERVDALLPKMSLEEKVAQMRIFHANIGVEAEGNGNLKLSDKVIEKLKLGIAGIKNPGEHMDPVAAAKFNNDLQKYIIENNRWGIPALFVTESYNGVDAAGSTRFGRPLTSAASFNPQLVNRIWDVVGREARLRGMHMCHSPEADLVRDPRFGRMSEAFGEDTYLTTQMVVNAINGVQGNYDGLGNGTHIGAVAKHFAGYGQVLGGSNFAAIEISPRTLIDEIYPPFEAAVKEAKTLGIMASHGDINGVASHGNPELLTGVLRDQWGFKGYVVSDSNDIARLFYFMNVAESPEEAAQMGLEAGIDIDLYAEDSYAYLPEMVKKNPNLEKLIDRSVRRVLRTKFILGLFDNPYIDIEEVKKGVRANSSLTLAKESDLESIILLKNENKILPLNKNKTTKIALLGPLVKDDTKSMFETVASKHISFVAEKGFHLTDEKGGAPKLLERDENAISKMVNMAKNSDLSILFLGGDEFTSKEAFFNNALGDRATIEPVGAQDELIEKIKALGKPVIVVLKHRRTLAINTISEQADAILDTWDLSEFGDESTARIIFGEVSPSGKLPVTVPRSIGQIPFHYSMKEINYKKGYLFMEDGPLYPFGYGLSYSNFEYSDIKKSNSEMTKDSEIEVSVTIKNTGNVKAKEVVQMYIKDVKGSVIRPDKELKGFEKISLNPGESKKVSFKITPEMLKFTGLKMEKVLESGEYTVMIGTSSVDYKKTSFQLKK</sequence>
<protein>
    <recommendedName>
        <fullName evidence="3">Putative beta-xylosidase</fullName>
        <ecNumber evidence="5">3.2.1.-</ecNumber>
    </recommendedName>
    <alternativeName>
        <fullName evidence="4">Glycosyl hydrolase 3 family protein P34</fullName>
        <shortName evidence="3">P34_GH3</shortName>
    </alternativeName>
    <alternativeName>
        <fullName evidence="3">Polysaccharide utilization locus H protein P34</fullName>
        <shortName>PUL H protein P34</shortName>
    </alternativeName>
</protein>
<name>PLH34_FORAG</name>
<feature type="signal peptide" evidence="1">
    <location>
        <begin position="1"/>
        <end position="18"/>
    </location>
</feature>
<feature type="chain" id="PRO_0000448302" description="Putative beta-xylosidase">
    <location>
        <begin position="19"/>
        <end position="756"/>
    </location>
</feature>
<feature type="lipid moiety-binding region" description="N-palmitoyl cysteine" evidence="1">
    <location>
        <position position="19"/>
    </location>
</feature>
<feature type="lipid moiety-binding region" description="S-diacylglycerol cysteine" evidence="1">
    <location>
        <position position="19"/>
    </location>
</feature>
<dbReference type="EC" id="3.2.1.-" evidence="5"/>
<dbReference type="EMBL" id="HG315671">
    <property type="protein sequence ID" value="CDF79935.1"/>
    <property type="molecule type" value="Genomic_DNA"/>
</dbReference>
<dbReference type="RefSeq" id="WP_038530543.1">
    <property type="nucleotide sequence ID" value="NZ_HG315671.1"/>
</dbReference>
<dbReference type="SMR" id="T2KMH9"/>
<dbReference type="STRING" id="1347342.BN863_22230"/>
<dbReference type="PATRIC" id="fig|1347342.6.peg.2230"/>
<dbReference type="eggNOG" id="COG1472">
    <property type="taxonomic scope" value="Bacteria"/>
</dbReference>
<dbReference type="HOGENOM" id="CLU_004542_5_1_10"/>
<dbReference type="OrthoDB" id="9805821at2"/>
<dbReference type="Proteomes" id="UP000016160">
    <property type="component" value="Chromosome"/>
</dbReference>
<dbReference type="GO" id="GO:0009279">
    <property type="term" value="C:cell outer membrane"/>
    <property type="evidence" value="ECO:0007669"/>
    <property type="project" value="UniProtKB-SubCell"/>
</dbReference>
<dbReference type="GO" id="GO:0046556">
    <property type="term" value="F:alpha-L-arabinofuranosidase activity"/>
    <property type="evidence" value="ECO:0007669"/>
    <property type="project" value="TreeGrafter"/>
</dbReference>
<dbReference type="GO" id="GO:0009044">
    <property type="term" value="F:xylan 1,4-beta-xylosidase activity"/>
    <property type="evidence" value="ECO:0007669"/>
    <property type="project" value="InterPro"/>
</dbReference>
<dbReference type="GO" id="GO:0031222">
    <property type="term" value="P:arabinan catabolic process"/>
    <property type="evidence" value="ECO:0007669"/>
    <property type="project" value="TreeGrafter"/>
</dbReference>
<dbReference type="GO" id="GO:0045493">
    <property type="term" value="P:xylan catabolic process"/>
    <property type="evidence" value="ECO:0007669"/>
    <property type="project" value="InterPro"/>
</dbReference>
<dbReference type="FunFam" id="2.60.40.10:FF:000495">
    <property type="entry name" value="Periplasmic beta-glucosidase"/>
    <property type="match status" value="1"/>
</dbReference>
<dbReference type="Gene3D" id="3.40.50.1700">
    <property type="entry name" value="Glycoside hydrolase family 3 C-terminal domain"/>
    <property type="match status" value="1"/>
</dbReference>
<dbReference type="Gene3D" id="3.20.20.300">
    <property type="entry name" value="Glycoside hydrolase, family 3, N-terminal domain"/>
    <property type="match status" value="1"/>
</dbReference>
<dbReference type="Gene3D" id="2.60.40.10">
    <property type="entry name" value="Immunoglobulins"/>
    <property type="match status" value="1"/>
</dbReference>
<dbReference type="InterPro" id="IPR044993">
    <property type="entry name" value="BXL"/>
</dbReference>
<dbReference type="InterPro" id="IPR026891">
    <property type="entry name" value="Fn3-like"/>
</dbReference>
<dbReference type="InterPro" id="IPR002772">
    <property type="entry name" value="Glyco_hydro_3_C"/>
</dbReference>
<dbReference type="InterPro" id="IPR036881">
    <property type="entry name" value="Glyco_hydro_3_C_sf"/>
</dbReference>
<dbReference type="InterPro" id="IPR001764">
    <property type="entry name" value="Glyco_hydro_3_N"/>
</dbReference>
<dbReference type="InterPro" id="IPR036962">
    <property type="entry name" value="Glyco_hydro_3_N_sf"/>
</dbReference>
<dbReference type="InterPro" id="IPR017853">
    <property type="entry name" value="Glycoside_hydrolase_SF"/>
</dbReference>
<dbReference type="InterPro" id="IPR013783">
    <property type="entry name" value="Ig-like_fold"/>
</dbReference>
<dbReference type="PANTHER" id="PTHR42721:SF3">
    <property type="entry name" value="BETA-D-XYLOSIDASE 5-RELATED"/>
    <property type="match status" value="1"/>
</dbReference>
<dbReference type="PANTHER" id="PTHR42721">
    <property type="entry name" value="SUGAR HYDROLASE-RELATED"/>
    <property type="match status" value="1"/>
</dbReference>
<dbReference type="Pfam" id="PF14310">
    <property type="entry name" value="Fn3-like"/>
    <property type="match status" value="1"/>
</dbReference>
<dbReference type="Pfam" id="PF00933">
    <property type="entry name" value="Glyco_hydro_3"/>
    <property type="match status" value="1"/>
</dbReference>
<dbReference type="Pfam" id="PF01915">
    <property type="entry name" value="Glyco_hydro_3_C"/>
    <property type="match status" value="1"/>
</dbReference>
<dbReference type="PRINTS" id="PR00133">
    <property type="entry name" value="GLHYDRLASE3"/>
</dbReference>
<dbReference type="SMART" id="SM01217">
    <property type="entry name" value="Fn3_like"/>
    <property type="match status" value="1"/>
</dbReference>
<dbReference type="SUPFAM" id="SSF51445">
    <property type="entry name" value="(Trans)glycosidases"/>
    <property type="match status" value="1"/>
</dbReference>
<dbReference type="SUPFAM" id="SSF52279">
    <property type="entry name" value="Beta-D-glucan exohydrolase, C-terminal domain"/>
    <property type="match status" value="1"/>
</dbReference>
<dbReference type="PROSITE" id="PS51257">
    <property type="entry name" value="PROKAR_LIPOPROTEIN"/>
    <property type="match status" value="1"/>
</dbReference>
<gene>
    <name type="ORF">BN863_22230</name>
</gene>
<reference key="1">
    <citation type="journal article" date="2013" name="Appl. Environ. Microbiol.">
        <title>The genome of the alga-associated marine flavobacterium Formosa agariphila KMM 3901T reveals a broad potential for degradation of algal polysaccharides.</title>
        <authorList>
            <person name="Mann A.J."/>
            <person name="Hahnke R.L."/>
            <person name="Huang S."/>
            <person name="Werner J."/>
            <person name="Xing P."/>
            <person name="Barbeyron T."/>
            <person name="Huettel B."/>
            <person name="Stueber K."/>
            <person name="Reinhardt R."/>
            <person name="Harder J."/>
            <person name="Gloeckner F.O."/>
            <person name="Amann R.I."/>
            <person name="Teeling H."/>
        </authorList>
    </citation>
    <scope>NUCLEOTIDE SEQUENCE [LARGE SCALE GENOMIC DNA]</scope>
    <source>
        <strain>DSM 15362 / KCTC 12365 / LMG 23005 / KMM 3901 / M-2Alg 35-1</strain>
    </source>
</reference>
<reference key="2">
    <citation type="journal article" date="2019" name="Nat. Chem. Biol.">
        <title>A marine bacterial enzymatic cascade degrades the algal polysaccharide ulvan.</title>
        <authorList>
            <person name="Reisky L."/>
            <person name="Prechoux A."/>
            <person name="Zuehlke M.K."/>
            <person name="Baeumgen M."/>
            <person name="Robb C.S."/>
            <person name="Gerlach N."/>
            <person name="Roret T."/>
            <person name="Stanetty C."/>
            <person name="Larocque R."/>
            <person name="Michel G."/>
            <person name="Song T."/>
            <person name="Markert S."/>
            <person name="Unfried F."/>
            <person name="Mihovilovic M.D."/>
            <person name="Trautwein-Schult A."/>
            <person name="Becher D."/>
            <person name="Schweder T."/>
            <person name="Bornscheuer U.T."/>
            <person name="Hehemann J.H."/>
        </authorList>
    </citation>
    <scope>FUNCTION</scope>
    <scope>SUBCELLULAR LOCATION</scope>
    <scope>INDUCTION</scope>
</reference>
<organism>
    <name type="scientific">Formosa agariphila (strain DSM 15362 / KCTC 12365 / LMG 23005 / KMM 3901 / M-2Alg 35-1)</name>
    <dbReference type="NCBI Taxonomy" id="1347342"/>
    <lineage>
        <taxon>Bacteria</taxon>
        <taxon>Pseudomonadati</taxon>
        <taxon>Bacteroidota</taxon>
        <taxon>Flavobacteriia</taxon>
        <taxon>Flavobacteriales</taxon>
        <taxon>Flavobacteriaceae</taxon>
        <taxon>Formosa</taxon>
    </lineage>
</organism>
<keyword id="KW-0998">Cell outer membrane</keyword>
<keyword id="KW-0326">Glycosidase</keyword>
<keyword id="KW-0378">Hydrolase</keyword>
<keyword id="KW-0449">Lipoprotein</keyword>
<keyword id="KW-0472">Membrane</keyword>
<keyword id="KW-0564">Palmitate</keyword>
<keyword id="KW-1185">Reference proteome</keyword>
<keyword id="KW-0732">Signal</keyword>
<proteinExistence type="evidence at transcript level"/>
<accession>T2KMH9</accession>